<accession>A0JUI2</accession>
<proteinExistence type="inferred from homology"/>
<evidence type="ECO:0000255" key="1">
    <source>
        <dbReference type="HAMAP-Rule" id="MF_00121"/>
    </source>
</evidence>
<dbReference type="EC" id="6.3.5.-" evidence="1"/>
<dbReference type="EMBL" id="CP000454">
    <property type="protein sequence ID" value="ABK02702.1"/>
    <property type="molecule type" value="Genomic_DNA"/>
</dbReference>
<dbReference type="RefSeq" id="WP_011691169.1">
    <property type="nucleotide sequence ID" value="NC_008541.1"/>
</dbReference>
<dbReference type="SMR" id="A0JUI2"/>
<dbReference type="STRING" id="290399.Arth_1308"/>
<dbReference type="KEGG" id="art:Arth_1308"/>
<dbReference type="eggNOG" id="COG0064">
    <property type="taxonomic scope" value="Bacteria"/>
</dbReference>
<dbReference type="HOGENOM" id="CLU_019240_0_0_11"/>
<dbReference type="OrthoDB" id="9804078at2"/>
<dbReference type="Proteomes" id="UP000000754">
    <property type="component" value="Chromosome"/>
</dbReference>
<dbReference type="GO" id="GO:0050566">
    <property type="term" value="F:asparaginyl-tRNA synthase (glutamine-hydrolyzing) activity"/>
    <property type="evidence" value="ECO:0007669"/>
    <property type="project" value="RHEA"/>
</dbReference>
<dbReference type="GO" id="GO:0005524">
    <property type="term" value="F:ATP binding"/>
    <property type="evidence" value="ECO:0007669"/>
    <property type="project" value="UniProtKB-KW"/>
</dbReference>
<dbReference type="GO" id="GO:0050567">
    <property type="term" value="F:glutaminyl-tRNA synthase (glutamine-hydrolyzing) activity"/>
    <property type="evidence" value="ECO:0007669"/>
    <property type="project" value="UniProtKB-UniRule"/>
</dbReference>
<dbReference type="GO" id="GO:0070681">
    <property type="term" value="P:glutaminyl-tRNAGln biosynthesis via transamidation"/>
    <property type="evidence" value="ECO:0007669"/>
    <property type="project" value="TreeGrafter"/>
</dbReference>
<dbReference type="GO" id="GO:0006412">
    <property type="term" value="P:translation"/>
    <property type="evidence" value="ECO:0007669"/>
    <property type="project" value="UniProtKB-UniRule"/>
</dbReference>
<dbReference type="FunFam" id="1.10.10.410:FF:000002">
    <property type="entry name" value="Aspartyl/glutamyl-tRNA(Asn/Gln) amidotransferase subunit B"/>
    <property type="match status" value="1"/>
</dbReference>
<dbReference type="Gene3D" id="1.10.10.410">
    <property type="match status" value="1"/>
</dbReference>
<dbReference type="HAMAP" id="MF_00121">
    <property type="entry name" value="GatB"/>
    <property type="match status" value="1"/>
</dbReference>
<dbReference type="InterPro" id="IPR017959">
    <property type="entry name" value="Asn/Gln-tRNA_amidoTrfase_suB/E"/>
</dbReference>
<dbReference type="InterPro" id="IPR006075">
    <property type="entry name" value="Asn/Gln-tRNA_Trfase_suB/E_cat"/>
</dbReference>
<dbReference type="InterPro" id="IPR018027">
    <property type="entry name" value="Asn/Gln_amidotransferase"/>
</dbReference>
<dbReference type="InterPro" id="IPR003789">
    <property type="entry name" value="Asn/Gln_tRNA_amidoTrase-B-like"/>
</dbReference>
<dbReference type="InterPro" id="IPR004413">
    <property type="entry name" value="GatB"/>
</dbReference>
<dbReference type="InterPro" id="IPR023168">
    <property type="entry name" value="GatB_Yqey_C_2"/>
</dbReference>
<dbReference type="InterPro" id="IPR017958">
    <property type="entry name" value="Gln-tRNA_amidoTrfase_suB_CS"/>
</dbReference>
<dbReference type="InterPro" id="IPR014746">
    <property type="entry name" value="Gln_synth/guanido_kin_cat_dom"/>
</dbReference>
<dbReference type="NCBIfam" id="TIGR00133">
    <property type="entry name" value="gatB"/>
    <property type="match status" value="1"/>
</dbReference>
<dbReference type="NCBIfam" id="NF004012">
    <property type="entry name" value="PRK05477.1-2"/>
    <property type="match status" value="1"/>
</dbReference>
<dbReference type="NCBIfam" id="NF004013">
    <property type="entry name" value="PRK05477.1-3"/>
    <property type="match status" value="1"/>
</dbReference>
<dbReference type="NCBIfam" id="NF004014">
    <property type="entry name" value="PRK05477.1-4"/>
    <property type="match status" value="1"/>
</dbReference>
<dbReference type="PANTHER" id="PTHR11659">
    <property type="entry name" value="GLUTAMYL-TRNA GLN AMIDOTRANSFERASE SUBUNIT B MITOCHONDRIAL AND PROKARYOTIC PET112-RELATED"/>
    <property type="match status" value="1"/>
</dbReference>
<dbReference type="PANTHER" id="PTHR11659:SF0">
    <property type="entry name" value="GLUTAMYL-TRNA(GLN) AMIDOTRANSFERASE SUBUNIT B, MITOCHONDRIAL"/>
    <property type="match status" value="1"/>
</dbReference>
<dbReference type="Pfam" id="PF02934">
    <property type="entry name" value="GatB_N"/>
    <property type="match status" value="1"/>
</dbReference>
<dbReference type="Pfam" id="PF02637">
    <property type="entry name" value="GatB_Yqey"/>
    <property type="match status" value="1"/>
</dbReference>
<dbReference type="SMART" id="SM00845">
    <property type="entry name" value="GatB_Yqey"/>
    <property type="match status" value="1"/>
</dbReference>
<dbReference type="SUPFAM" id="SSF89095">
    <property type="entry name" value="GatB/YqeY motif"/>
    <property type="match status" value="1"/>
</dbReference>
<dbReference type="SUPFAM" id="SSF55931">
    <property type="entry name" value="Glutamine synthetase/guanido kinase"/>
    <property type="match status" value="1"/>
</dbReference>
<dbReference type="PROSITE" id="PS01234">
    <property type="entry name" value="GATB"/>
    <property type="match status" value="1"/>
</dbReference>
<organism>
    <name type="scientific">Arthrobacter sp. (strain FB24)</name>
    <dbReference type="NCBI Taxonomy" id="290399"/>
    <lineage>
        <taxon>Bacteria</taxon>
        <taxon>Bacillati</taxon>
        <taxon>Actinomycetota</taxon>
        <taxon>Actinomycetes</taxon>
        <taxon>Micrococcales</taxon>
        <taxon>Micrococcaceae</taxon>
        <taxon>Arthrobacter</taxon>
    </lineage>
</organism>
<protein>
    <recommendedName>
        <fullName evidence="1">Aspartyl/glutamyl-tRNA(Asn/Gln) amidotransferase subunit B</fullName>
        <shortName evidence="1">Asp/Glu-ADT subunit B</shortName>
        <ecNumber evidence="1">6.3.5.-</ecNumber>
    </recommendedName>
</protein>
<keyword id="KW-0067">ATP-binding</keyword>
<keyword id="KW-0436">Ligase</keyword>
<keyword id="KW-0547">Nucleotide-binding</keyword>
<keyword id="KW-0648">Protein biosynthesis</keyword>
<keyword id="KW-1185">Reference proteome</keyword>
<feature type="chain" id="PRO_1000015932" description="Aspartyl/glutamyl-tRNA(Asn/Gln) amidotransferase subunit B">
    <location>
        <begin position="1"/>
        <end position="502"/>
    </location>
</feature>
<reference key="1">
    <citation type="journal article" date="2013" name="Stand. Genomic Sci.">
        <title>Complete genome sequence of Arthrobacter sp. strain FB24.</title>
        <authorList>
            <person name="Nakatsu C.H."/>
            <person name="Barabote R."/>
            <person name="Thompson S."/>
            <person name="Bruce D."/>
            <person name="Detter C."/>
            <person name="Brettin T."/>
            <person name="Han C."/>
            <person name="Beasley F."/>
            <person name="Chen W."/>
            <person name="Konopka A."/>
            <person name="Xie G."/>
        </authorList>
    </citation>
    <scope>NUCLEOTIDE SEQUENCE [LARGE SCALE GENOMIC DNA]</scope>
    <source>
        <strain>FB24</strain>
    </source>
</reference>
<comment type="function">
    <text evidence="1">Allows the formation of correctly charged Asn-tRNA(Asn) or Gln-tRNA(Gln) through the transamidation of misacylated Asp-tRNA(Asn) or Glu-tRNA(Gln) in organisms which lack either or both of asparaginyl-tRNA or glutaminyl-tRNA synthetases. The reaction takes place in the presence of glutamine and ATP through an activated phospho-Asp-tRNA(Asn) or phospho-Glu-tRNA(Gln).</text>
</comment>
<comment type="catalytic activity">
    <reaction evidence="1">
        <text>L-glutamyl-tRNA(Gln) + L-glutamine + ATP + H2O = L-glutaminyl-tRNA(Gln) + L-glutamate + ADP + phosphate + H(+)</text>
        <dbReference type="Rhea" id="RHEA:17521"/>
        <dbReference type="Rhea" id="RHEA-COMP:9681"/>
        <dbReference type="Rhea" id="RHEA-COMP:9684"/>
        <dbReference type="ChEBI" id="CHEBI:15377"/>
        <dbReference type="ChEBI" id="CHEBI:15378"/>
        <dbReference type="ChEBI" id="CHEBI:29985"/>
        <dbReference type="ChEBI" id="CHEBI:30616"/>
        <dbReference type="ChEBI" id="CHEBI:43474"/>
        <dbReference type="ChEBI" id="CHEBI:58359"/>
        <dbReference type="ChEBI" id="CHEBI:78520"/>
        <dbReference type="ChEBI" id="CHEBI:78521"/>
        <dbReference type="ChEBI" id="CHEBI:456216"/>
    </reaction>
</comment>
<comment type="catalytic activity">
    <reaction evidence="1">
        <text>L-aspartyl-tRNA(Asn) + L-glutamine + ATP + H2O = L-asparaginyl-tRNA(Asn) + L-glutamate + ADP + phosphate + 2 H(+)</text>
        <dbReference type="Rhea" id="RHEA:14513"/>
        <dbReference type="Rhea" id="RHEA-COMP:9674"/>
        <dbReference type="Rhea" id="RHEA-COMP:9677"/>
        <dbReference type="ChEBI" id="CHEBI:15377"/>
        <dbReference type="ChEBI" id="CHEBI:15378"/>
        <dbReference type="ChEBI" id="CHEBI:29985"/>
        <dbReference type="ChEBI" id="CHEBI:30616"/>
        <dbReference type="ChEBI" id="CHEBI:43474"/>
        <dbReference type="ChEBI" id="CHEBI:58359"/>
        <dbReference type="ChEBI" id="CHEBI:78515"/>
        <dbReference type="ChEBI" id="CHEBI:78516"/>
        <dbReference type="ChEBI" id="CHEBI:456216"/>
    </reaction>
</comment>
<comment type="subunit">
    <text evidence="1">Heterotrimer of A, B and C subunits.</text>
</comment>
<comment type="similarity">
    <text evidence="1">Belongs to the GatB/GatE family. GatB subfamily.</text>
</comment>
<sequence>MSTDATLSFEEAMEKYDPVLGFEVHVELNTKTKMFSSAPNVFGDEPNTNVNEVDLGMPGVLPVVNKTAIESSIKIGLALNCKIAETCRFARKNYFYPDTPKNFQTSQYDEPIAYDGYLDIELSDGTVFRVEIERAHMEEDAGKLTHMGGSAGRIQGADYSLVDYNRSGVPLVEIVTKPIQGAGSRAPELAKAYVAAVREIVKNLGVSDAKMERGNVRCDANVSLRPHGRERFGIRSETKNVNSLRAVEHAVRYEIQRHAAVLDSGEPVIQETRHWHEDTRSTTSGRAKSDADDYRYFPEPDLVPIVASREWVEELRATLPEPPAERRKRLQADWGYSDLEFRDVVNAGVMDEIEETIAAGATATVARKWWMGEIVGRAKNADVDPGQLGVKPETIVELNKMVEAGKINNKMAAEVLDGVLAGEGTPAEIVEKRGLAVVSDDGPLLEAIDAALAAQPDVADKIRGGKVQAIGAIVGGVMKATRGQADAGRVRELILERLGVEG</sequence>
<gene>
    <name evidence="1" type="primary">gatB</name>
    <name type="ordered locus">Arth_1308</name>
</gene>
<name>GATB_ARTS2</name>